<dbReference type="EC" id="6.3.5.-" evidence="1"/>
<dbReference type="EMBL" id="CP000431">
    <property type="protein sequence ID" value="ABG98255.1"/>
    <property type="molecule type" value="Genomic_DNA"/>
</dbReference>
<dbReference type="RefSeq" id="WP_009479671.1">
    <property type="nucleotide sequence ID" value="NC_008268.1"/>
</dbReference>
<dbReference type="SMR" id="Q0S2I1"/>
<dbReference type="KEGG" id="rha:RHA1_ro06480"/>
<dbReference type="eggNOG" id="COG0064">
    <property type="taxonomic scope" value="Bacteria"/>
</dbReference>
<dbReference type="HOGENOM" id="CLU_019240_0_0_11"/>
<dbReference type="OrthoDB" id="9804078at2"/>
<dbReference type="Proteomes" id="UP000008710">
    <property type="component" value="Chromosome"/>
</dbReference>
<dbReference type="GO" id="GO:0050566">
    <property type="term" value="F:asparaginyl-tRNA synthase (glutamine-hydrolyzing) activity"/>
    <property type="evidence" value="ECO:0007669"/>
    <property type="project" value="RHEA"/>
</dbReference>
<dbReference type="GO" id="GO:0005524">
    <property type="term" value="F:ATP binding"/>
    <property type="evidence" value="ECO:0007669"/>
    <property type="project" value="UniProtKB-KW"/>
</dbReference>
<dbReference type="GO" id="GO:0050567">
    <property type="term" value="F:glutaminyl-tRNA synthase (glutamine-hydrolyzing) activity"/>
    <property type="evidence" value="ECO:0007669"/>
    <property type="project" value="UniProtKB-UniRule"/>
</dbReference>
<dbReference type="GO" id="GO:0070681">
    <property type="term" value="P:glutaminyl-tRNAGln biosynthesis via transamidation"/>
    <property type="evidence" value="ECO:0007669"/>
    <property type="project" value="TreeGrafter"/>
</dbReference>
<dbReference type="GO" id="GO:0006412">
    <property type="term" value="P:translation"/>
    <property type="evidence" value="ECO:0007669"/>
    <property type="project" value="UniProtKB-UniRule"/>
</dbReference>
<dbReference type="FunFam" id="1.10.10.410:FF:000002">
    <property type="entry name" value="Aspartyl/glutamyl-tRNA(Asn/Gln) amidotransferase subunit B"/>
    <property type="match status" value="1"/>
</dbReference>
<dbReference type="Gene3D" id="1.10.10.410">
    <property type="match status" value="1"/>
</dbReference>
<dbReference type="HAMAP" id="MF_00121">
    <property type="entry name" value="GatB"/>
    <property type="match status" value="1"/>
</dbReference>
<dbReference type="InterPro" id="IPR017959">
    <property type="entry name" value="Asn/Gln-tRNA_amidoTrfase_suB/E"/>
</dbReference>
<dbReference type="InterPro" id="IPR006075">
    <property type="entry name" value="Asn/Gln-tRNA_Trfase_suB/E_cat"/>
</dbReference>
<dbReference type="InterPro" id="IPR018027">
    <property type="entry name" value="Asn/Gln_amidotransferase"/>
</dbReference>
<dbReference type="InterPro" id="IPR003789">
    <property type="entry name" value="Asn/Gln_tRNA_amidoTrase-B-like"/>
</dbReference>
<dbReference type="InterPro" id="IPR004413">
    <property type="entry name" value="GatB"/>
</dbReference>
<dbReference type="InterPro" id="IPR023168">
    <property type="entry name" value="GatB_Yqey_C_2"/>
</dbReference>
<dbReference type="InterPro" id="IPR014746">
    <property type="entry name" value="Gln_synth/guanido_kin_cat_dom"/>
</dbReference>
<dbReference type="NCBIfam" id="TIGR00133">
    <property type="entry name" value="gatB"/>
    <property type="match status" value="1"/>
</dbReference>
<dbReference type="NCBIfam" id="NF004012">
    <property type="entry name" value="PRK05477.1-2"/>
    <property type="match status" value="1"/>
</dbReference>
<dbReference type="NCBIfam" id="NF004013">
    <property type="entry name" value="PRK05477.1-3"/>
    <property type="match status" value="1"/>
</dbReference>
<dbReference type="NCBIfam" id="NF004014">
    <property type="entry name" value="PRK05477.1-4"/>
    <property type="match status" value="1"/>
</dbReference>
<dbReference type="PANTHER" id="PTHR11659">
    <property type="entry name" value="GLUTAMYL-TRNA GLN AMIDOTRANSFERASE SUBUNIT B MITOCHONDRIAL AND PROKARYOTIC PET112-RELATED"/>
    <property type="match status" value="1"/>
</dbReference>
<dbReference type="PANTHER" id="PTHR11659:SF0">
    <property type="entry name" value="GLUTAMYL-TRNA(GLN) AMIDOTRANSFERASE SUBUNIT B, MITOCHONDRIAL"/>
    <property type="match status" value="1"/>
</dbReference>
<dbReference type="Pfam" id="PF02934">
    <property type="entry name" value="GatB_N"/>
    <property type="match status" value="1"/>
</dbReference>
<dbReference type="Pfam" id="PF02637">
    <property type="entry name" value="GatB_Yqey"/>
    <property type="match status" value="1"/>
</dbReference>
<dbReference type="SMART" id="SM00845">
    <property type="entry name" value="GatB_Yqey"/>
    <property type="match status" value="1"/>
</dbReference>
<dbReference type="SUPFAM" id="SSF89095">
    <property type="entry name" value="GatB/YqeY motif"/>
    <property type="match status" value="1"/>
</dbReference>
<dbReference type="SUPFAM" id="SSF55931">
    <property type="entry name" value="Glutamine synthetase/guanido kinase"/>
    <property type="match status" value="1"/>
</dbReference>
<organism>
    <name type="scientific">Rhodococcus jostii (strain RHA1)</name>
    <dbReference type="NCBI Taxonomy" id="101510"/>
    <lineage>
        <taxon>Bacteria</taxon>
        <taxon>Bacillati</taxon>
        <taxon>Actinomycetota</taxon>
        <taxon>Actinomycetes</taxon>
        <taxon>Mycobacteriales</taxon>
        <taxon>Nocardiaceae</taxon>
        <taxon>Rhodococcus</taxon>
    </lineage>
</organism>
<comment type="function">
    <text evidence="1">Allows the formation of correctly charged Asn-tRNA(Asn) or Gln-tRNA(Gln) through the transamidation of misacylated Asp-tRNA(Asn) or Glu-tRNA(Gln) in organisms which lack either or both of asparaginyl-tRNA or glutaminyl-tRNA synthetases. The reaction takes place in the presence of glutamine and ATP through an activated phospho-Asp-tRNA(Asn) or phospho-Glu-tRNA(Gln).</text>
</comment>
<comment type="catalytic activity">
    <reaction evidence="1">
        <text>L-glutamyl-tRNA(Gln) + L-glutamine + ATP + H2O = L-glutaminyl-tRNA(Gln) + L-glutamate + ADP + phosphate + H(+)</text>
        <dbReference type="Rhea" id="RHEA:17521"/>
        <dbReference type="Rhea" id="RHEA-COMP:9681"/>
        <dbReference type="Rhea" id="RHEA-COMP:9684"/>
        <dbReference type="ChEBI" id="CHEBI:15377"/>
        <dbReference type="ChEBI" id="CHEBI:15378"/>
        <dbReference type="ChEBI" id="CHEBI:29985"/>
        <dbReference type="ChEBI" id="CHEBI:30616"/>
        <dbReference type="ChEBI" id="CHEBI:43474"/>
        <dbReference type="ChEBI" id="CHEBI:58359"/>
        <dbReference type="ChEBI" id="CHEBI:78520"/>
        <dbReference type="ChEBI" id="CHEBI:78521"/>
        <dbReference type="ChEBI" id="CHEBI:456216"/>
    </reaction>
</comment>
<comment type="catalytic activity">
    <reaction evidence="1">
        <text>L-aspartyl-tRNA(Asn) + L-glutamine + ATP + H2O = L-asparaginyl-tRNA(Asn) + L-glutamate + ADP + phosphate + 2 H(+)</text>
        <dbReference type="Rhea" id="RHEA:14513"/>
        <dbReference type="Rhea" id="RHEA-COMP:9674"/>
        <dbReference type="Rhea" id="RHEA-COMP:9677"/>
        <dbReference type="ChEBI" id="CHEBI:15377"/>
        <dbReference type="ChEBI" id="CHEBI:15378"/>
        <dbReference type="ChEBI" id="CHEBI:29985"/>
        <dbReference type="ChEBI" id="CHEBI:30616"/>
        <dbReference type="ChEBI" id="CHEBI:43474"/>
        <dbReference type="ChEBI" id="CHEBI:58359"/>
        <dbReference type="ChEBI" id="CHEBI:78515"/>
        <dbReference type="ChEBI" id="CHEBI:78516"/>
        <dbReference type="ChEBI" id="CHEBI:456216"/>
    </reaction>
</comment>
<comment type="subunit">
    <text evidence="1">Heterotrimer of A, B and C subunits.</text>
</comment>
<comment type="similarity">
    <text evidence="1">Belongs to the GatB/GatE family. GatB subfamily.</text>
</comment>
<accession>Q0S2I1</accession>
<sequence>MTAVDAPDLLDYDDVLAKYEPVLGMEVHVELGTETKMFCPCPTEFGAEPNTQVCPVCLGLPGSLPVVNEAAVESAIRIGLALNCSITPWGRFARKNYFYPDQPKNYQISQYDEPIATDGHLDVVLDDGTTWRVEIERAHMEEDTGKSLHVGGATGRIHGASHSLLDYNRAGVPLVEIVTKTISGAGARAPEVARAYVTALRDLLKSLNVSDVRMDQGSMRCDANVSLMPIGATELGTRTETKNVNSLKSVEVAVRYEMRRQAAVLEAGGEVIQETRHFQEADGTTSPGRRKETAEDYRYFPEPDLEPVAPSAEWIEELRGTLPELPWVRRARIQADWGVSDEVMRDLVNAGALDLVIATVEAGASPEAARSWWVSYLAQQANTRGVELAELPITPAQVAQVVALIDSGKLNNKVARQVVDHVLEGEGDPEQVVANHPELVVERDDTKLKAAVEEALAANPDIAEKIRGGKVAAAGKIVGDVMKATRGQADPARVKELVIEACG</sequence>
<gene>
    <name evidence="1" type="primary">gatB</name>
    <name type="ordered locus">RHA1_ro06480</name>
</gene>
<evidence type="ECO:0000255" key="1">
    <source>
        <dbReference type="HAMAP-Rule" id="MF_00121"/>
    </source>
</evidence>
<proteinExistence type="inferred from homology"/>
<feature type="chain" id="PRO_1000071375" description="Aspartyl/glutamyl-tRNA(Asn/Gln) amidotransferase subunit B">
    <location>
        <begin position="1"/>
        <end position="503"/>
    </location>
</feature>
<keyword id="KW-0067">ATP-binding</keyword>
<keyword id="KW-0436">Ligase</keyword>
<keyword id="KW-0547">Nucleotide-binding</keyword>
<keyword id="KW-0648">Protein biosynthesis</keyword>
<protein>
    <recommendedName>
        <fullName evidence="1">Aspartyl/glutamyl-tRNA(Asn/Gln) amidotransferase subunit B</fullName>
        <shortName evidence="1">Asp/Glu-ADT subunit B</shortName>
        <ecNumber evidence="1">6.3.5.-</ecNumber>
    </recommendedName>
</protein>
<reference key="1">
    <citation type="journal article" date="2006" name="Proc. Natl. Acad. Sci. U.S.A.">
        <title>The complete genome of Rhodococcus sp. RHA1 provides insights into a catabolic powerhouse.</title>
        <authorList>
            <person name="McLeod M.P."/>
            <person name="Warren R.L."/>
            <person name="Hsiao W.W.L."/>
            <person name="Araki N."/>
            <person name="Myhre M."/>
            <person name="Fernandes C."/>
            <person name="Miyazawa D."/>
            <person name="Wong W."/>
            <person name="Lillquist A.L."/>
            <person name="Wang D."/>
            <person name="Dosanjh M."/>
            <person name="Hara H."/>
            <person name="Petrescu A."/>
            <person name="Morin R.D."/>
            <person name="Yang G."/>
            <person name="Stott J.M."/>
            <person name="Schein J.E."/>
            <person name="Shin H."/>
            <person name="Smailus D."/>
            <person name="Siddiqui A.S."/>
            <person name="Marra M.A."/>
            <person name="Jones S.J.M."/>
            <person name="Holt R."/>
            <person name="Brinkman F.S.L."/>
            <person name="Miyauchi K."/>
            <person name="Fukuda M."/>
            <person name="Davies J.E."/>
            <person name="Mohn W.W."/>
            <person name="Eltis L.D."/>
        </authorList>
    </citation>
    <scope>NUCLEOTIDE SEQUENCE [LARGE SCALE GENOMIC DNA]</scope>
    <source>
        <strain>RHA1</strain>
    </source>
</reference>
<name>GATB_RHOJR</name>